<gene>
    <name evidence="1" type="primary">argB</name>
    <name type="ordered locus">A9601_05561</name>
</gene>
<accession>A2BPY1</accession>
<keyword id="KW-0028">Amino-acid biosynthesis</keyword>
<keyword id="KW-0055">Arginine biosynthesis</keyword>
<keyword id="KW-0067">ATP-binding</keyword>
<keyword id="KW-0963">Cytoplasm</keyword>
<keyword id="KW-0418">Kinase</keyword>
<keyword id="KW-0547">Nucleotide-binding</keyword>
<keyword id="KW-0808">Transferase</keyword>
<name>ARGB_PROMS</name>
<comment type="function">
    <text evidence="1">Catalyzes the ATP-dependent phosphorylation of N-acetyl-L-glutamate.</text>
</comment>
<comment type="catalytic activity">
    <reaction evidence="1">
        <text>N-acetyl-L-glutamate + ATP = N-acetyl-L-glutamyl 5-phosphate + ADP</text>
        <dbReference type="Rhea" id="RHEA:14629"/>
        <dbReference type="ChEBI" id="CHEBI:30616"/>
        <dbReference type="ChEBI" id="CHEBI:44337"/>
        <dbReference type="ChEBI" id="CHEBI:57936"/>
        <dbReference type="ChEBI" id="CHEBI:456216"/>
        <dbReference type="EC" id="2.7.2.8"/>
    </reaction>
</comment>
<comment type="pathway">
    <text evidence="1">Amino-acid biosynthesis; L-arginine biosynthesis; N(2)-acetyl-L-ornithine from L-glutamate: step 2/4.</text>
</comment>
<comment type="subcellular location">
    <subcellularLocation>
        <location evidence="1">Cytoplasm</location>
    </subcellularLocation>
</comment>
<comment type="similarity">
    <text evidence="1">Belongs to the acetylglutamate kinase family. ArgB subfamily.</text>
</comment>
<evidence type="ECO:0000255" key="1">
    <source>
        <dbReference type="HAMAP-Rule" id="MF_00082"/>
    </source>
</evidence>
<proteinExistence type="inferred from homology"/>
<organism>
    <name type="scientific">Prochlorococcus marinus (strain AS9601)</name>
    <dbReference type="NCBI Taxonomy" id="146891"/>
    <lineage>
        <taxon>Bacteria</taxon>
        <taxon>Bacillati</taxon>
        <taxon>Cyanobacteriota</taxon>
        <taxon>Cyanophyceae</taxon>
        <taxon>Synechococcales</taxon>
        <taxon>Prochlorococcaceae</taxon>
        <taxon>Prochlorococcus</taxon>
    </lineage>
</organism>
<sequence>MNDSQRVSILSEALPYIQSFSGRKIVIKYGGSVMENDNLKNAFFRDIALLSTVGVCPIVIHGGGPEINNWLRKLEISPKFENGLRITDQKTMEIVEMVLMGRVNKEIVKGINKTGSLAVGISGLDGNLIQSRELGDGSHGLVGEVTKINPEILDPLISKGYIPIISSIGSTLEGISHNINADFVAGEIAAAINAEKLILLTDTQGILKEKDDKNSLVAKTNLKEARDFIDKKIVTAGMIPKTECCIRALAQGVKAAHIIDGQIEHSLLLEIFTNSGIGTMIVA</sequence>
<reference key="1">
    <citation type="journal article" date="2007" name="PLoS Genet.">
        <title>Patterns and implications of gene gain and loss in the evolution of Prochlorococcus.</title>
        <authorList>
            <person name="Kettler G.C."/>
            <person name="Martiny A.C."/>
            <person name="Huang K."/>
            <person name="Zucker J."/>
            <person name="Coleman M.L."/>
            <person name="Rodrigue S."/>
            <person name="Chen F."/>
            <person name="Lapidus A."/>
            <person name="Ferriera S."/>
            <person name="Johnson J."/>
            <person name="Steglich C."/>
            <person name="Church G.M."/>
            <person name="Richardson P."/>
            <person name="Chisholm S.W."/>
        </authorList>
    </citation>
    <scope>NUCLEOTIDE SEQUENCE [LARGE SCALE GENOMIC DNA]</scope>
    <source>
        <strain>AS9601</strain>
    </source>
</reference>
<protein>
    <recommendedName>
        <fullName evidence="1">Acetylglutamate kinase</fullName>
        <ecNumber evidence="1">2.7.2.8</ecNumber>
    </recommendedName>
    <alternativeName>
        <fullName evidence="1">N-acetyl-L-glutamate 5-phosphotransferase</fullName>
    </alternativeName>
    <alternativeName>
        <fullName evidence="1">NAG kinase</fullName>
        <shortName evidence="1">NAGK</shortName>
    </alternativeName>
</protein>
<dbReference type="EC" id="2.7.2.8" evidence="1"/>
<dbReference type="EMBL" id="CP000551">
    <property type="protein sequence ID" value="ABM69842.1"/>
    <property type="molecule type" value="Genomic_DNA"/>
</dbReference>
<dbReference type="RefSeq" id="WP_011818008.1">
    <property type="nucleotide sequence ID" value="NC_008816.1"/>
</dbReference>
<dbReference type="SMR" id="A2BPY1"/>
<dbReference type="STRING" id="146891.A9601_05561"/>
<dbReference type="KEGG" id="pmb:A9601_05561"/>
<dbReference type="eggNOG" id="COG0548">
    <property type="taxonomic scope" value="Bacteria"/>
</dbReference>
<dbReference type="HOGENOM" id="CLU_053680_0_0_3"/>
<dbReference type="OrthoDB" id="9803155at2"/>
<dbReference type="UniPathway" id="UPA00068">
    <property type="reaction ID" value="UER00107"/>
</dbReference>
<dbReference type="Proteomes" id="UP000002590">
    <property type="component" value="Chromosome"/>
</dbReference>
<dbReference type="GO" id="GO:0005737">
    <property type="term" value="C:cytoplasm"/>
    <property type="evidence" value="ECO:0007669"/>
    <property type="project" value="UniProtKB-SubCell"/>
</dbReference>
<dbReference type="GO" id="GO:0003991">
    <property type="term" value="F:acetylglutamate kinase activity"/>
    <property type="evidence" value="ECO:0007669"/>
    <property type="project" value="UniProtKB-UniRule"/>
</dbReference>
<dbReference type="GO" id="GO:0005524">
    <property type="term" value="F:ATP binding"/>
    <property type="evidence" value="ECO:0007669"/>
    <property type="project" value="UniProtKB-UniRule"/>
</dbReference>
<dbReference type="GO" id="GO:0042450">
    <property type="term" value="P:arginine biosynthetic process via ornithine"/>
    <property type="evidence" value="ECO:0007669"/>
    <property type="project" value="UniProtKB-UniRule"/>
</dbReference>
<dbReference type="GO" id="GO:0006526">
    <property type="term" value="P:L-arginine biosynthetic process"/>
    <property type="evidence" value="ECO:0007669"/>
    <property type="project" value="UniProtKB-UniPathway"/>
</dbReference>
<dbReference type="CDD" id="cd04250">
    <property type="entry name" value="AAK_NAGK-C"/>
    <property type="match status" value="1"/>
</dbReference>
<dbReference type="FunFam" id="3.40.1160.10:FF:000004">
    <property type="entry name" value="Acetylglutamate kinase"/>
    <property type="match status" value="1"/>
</dbReference>
<dbReference type="Gene3D" id="3.40.1160.10">
    <property type="entry name" value="Acetylglutamate kinase-like"/>
    <property type="match status" value="1"/>
</dbReference>
<dbReference type="HAMAP" id="MF_00082">
    <property type="entry name" value="ArgB"/>
    <property type="match status" value="1"/>
</dbReference>
<dbReference type="InterPro" id="IPR036393">
    <property type="entry name" value="AceGlu_kinase-like_sf"/>
</dbReference>
<dbReference type="InterPro" id="IPR004662">
    <property type="entry name" value="AcgluKinase_fam"/>
</dbReference>
<dbReference type="InterPro" id="IPR037528">
    <property type="entry name" value="ArgB"/>
</dbReference>
<dbReference type="InterPro" id="IPR001048">
    <property type="entry name" value="Asp/Glu/Uridylate_kinase"/>
</dbReference>
<dbReference type="InterPro" id="IPR041727">
    <property type="entry name" value="NAGK-C"/>
</dbReference>
<dbReference type="NCBIfam" id="TIGR00761">
    <property type="entry name" value="argB"/>
    <property type="match status" value="1"/>
</dbReference>
<dbReference type="PANTHER" id="PTHR23342">
    <property type="entry name" value="N-ACETYLGLUTAMATE SYNTHASE"/>
    <property type="match status" value="1"/>
</dbReference>
<dbReference type="PANTHER" id="PTHR23342:SF0">
    <property type="entry name" value="N-ACETYLGLUTAMATE SYNTHASE, MITOCHONDRIAL"/>
    <property type="match status" value="1"/>
</dbReference>
<dbReference type="Pfam" id="PF00696">
    <property type="entry name" value="AA_kinase"/>
    <property type="match status" value="1"/>
</dbReference>
<dbReference type="PIRSF" id="PIRSF000728">
    <property type="entry name" value="NAGK"/>
    <property type="match status" value="1"/>
</dbReference>
<dbReference type="SUPFAM" id="SSF53633">
    <property type="entry name" value="Carbamate kinase-like"/>
    <property type="match status" value="1"/>
</dbReference>
<feature type="chain" id="PRO_1000010526" description="Acetylglutamate kinase">
    <location>
        <begin position="1"/>
        <end position="283"/>
    </location>
</feature>
<feature type="binding site" evidence="1">
    <location>
        <begin position="63"/>
        <end position="64"/>
    </location>
    <ligand>
        <name>substrate</name>
    </ligand>
</feature>
<feature type="binding site" evidence="1">
    <location>
        <position position="85"/>
    </location>
    <ligand>
        <name>substrate</name>
    </ligand>
</feature>
<feature type="binding site" evidence="1">
    <location>
        <position position="178"/>
    </location>
    <ligand>
        <name>substrate</name>
    </ligand>
</feature>
<feature type="site" description="Transition state stabilizer" evidence="1">
    <location>
        <position position="28"/>
    </location>
</feature>
<feature type="site" description="Transition state stabilizer" evidence="1">
    <location>
        <position position="241"/>
    </location>
</feature>